<reference key="1">
    <citation type="journal article" date="1987" name="Nucleic Acids Res.">
        <title>Evolution of late H2A, H2B, and H4 histone genes of the sea urchin, Strongylocentrotus purpuratus.</title>
        <authorList>
            <person name="Maxson R."/>
            <person name="Mohun T."/>
            <person name="Gormezano G."/>
            <person name="Kedes L."/>
        </authorList>
    </citation>
    <scope>NUCLEOTIDE SEQUENCE [GENOMIC DNA]</scope>
</reference>
<reference key="2">
    <citation type="journal article" date="1995" name="Dev. Genet.">
        <title>Embryonic regulation of histone ubiquitination in the sea urchin.</title>
        <authorList>
            <person name="Jasinskiene N."/>
            <person name="Jasinskas A."/>
            <person name="Langmore J.P."/>
        </authorList>
    </citation>
    <scope>UBIQUITINATION</scope>
</reference>
<sequence>MPAKAQAAGKKGSKKAKAPKPSGDKKRRRKRKESYGIYIYKVLKQVHPDTGISSRAMSIMNSFVNDVFERIAAEASRLAHYNKKSTITSREVQTAVRLLLPGELAKHAVSEGTKAVTKYTTSK</sequence>
<evidence type="ECO:0000250" key="1"/>
<evidence type="ECO:0000256" key="2">
    <source>
        <dbReference type="SAM" id="MobiDB-lite"/>
    </source>
</evidence>
<evidence type="ECO:0000305" key="3"/>
<evidence type="ECO:0000305" key="4">
    <source>
    </source>
</evidence>
<proteinExistence type="evidence at protein level"/>
<accession>P16889</accession>
<protein>
    <recommendedName>
        <fullName>Late histone H2B.L3</fullName>
    </recommendedName>
</protein>
<comment type="function">
    <text>Core component of nucleosome. Nucleosomes wrap and compact DNA into chromatin, limiting DNA accessibility to the cellular machineries which require DNA as a template. Histones thereby play a central role in transcription regulation, DNA repair, DNA replication and chromosomal stability. DNA accessibility is regulated via a complex set of post-translational modifications of histones, also called histone code, and nucleosome remodeling.</text>
</comment>
<comment type="subunit">
    <text>The nucleosome is a histone octamer containing two molecules each of H2A, H2B, H3 and H4 assembled in one H3-H4 heterotetramer and two H2A-H2B heterodimers. The octamer wraps approximately 147 bp of DNA.</text>
</comment>
<comment type="subcellular location">
    <subcellularLocation>
        <location>Nucleus</location>
    </subcellularLocation>
    <subcellularLocation>
        <location>Chromosome</location>
    </subcellularLocation>
</comment>
<comment type="PTM">
    <text evidence="1">Monoubiquitination of Lys-118 gives a specific tag for epigenetic transcriptional activation and is also prerequisite for histone H3 'Lys-4' and 'Lys-79' methylation.</text>
</comment>
<comment type="PTM">
    <text evidence="1">GlcNAcylation at Ser-110 promotes monoubiquitination of Lys-118. It fluctuates in response to extracellular glucose, and associates with transcribed genes (By similarity).</text>
</comment>
<comment type="similarity">
    <text evidence="3">Belongs to the histone H2B family.</text>
</comment>
<organism>
    <name type="scientific">Strongylocentrotus purpuratus</name>
    <name type="common">Purple sea urchin</name>
    <dbReference type="NCBI Taxonomy" id="7668"/>
    <lineage>
        <taxon>Eukaryota</taxon>
        <taxon>Metazoa</taxon>
        <taxon>Echinodermata</taxon>
        <taxon>Eleutherozoa</taxon>
        <taxon>Echinozoa</taxon>
        <taxon>Echinoidea</taxon>
        <taxon>Euechinoidea</taxon>
        <taxon>Echinacea</taxon>
        <taxon>Camarodonta</taxon>
        <taxon>Echinidea</taxon>
        <taxon>Strongylocentrotidae</taxon>
        <taxon>Strongylocentrotus</taxon>
    </lineage>
</organism>
<dbReference type="EMBL" id="X06642">
    <property type="protein sequence ID" value="CAA29850.1"/>
    <property type="status" value="ALT_SEQ"/>
    <property type="molecule type" value="Genomic_DNA"/>
</dbReference>
<dbReference type="PIR" id="S01621">
    <property type="entry name" value="S01621"/>
</dbReference>
<dbReference type="RefSeq" id="NP_999719.1">
    <property type="nucleotide sequence ID" value="NM_214554.1"/>
</dbReference>
<dbReference type="SMR" id="P16889"/>
<dbReference type="FunCoup" id="P16889">
    <property type="interactions" value="1625"/>
</dbReference>
<dbReference type="STRING" id="7668.P16889"/>
<dbReference type="iPTMnet" id="P16889"/>
<dbReference type="GeneID" id="373349"/>
<dbReference type="KEGG" id="spu:373349"/>
<dbReference type="eggNOG" id="KOG1744">
    <property type="taxonomic scope" value="Eukaryota"/>
</dbReference>
<dbReference type="HOGENOM" id="CLU_075666_2_1_1"/>
<dbReference type="InParanoid" id="P16889"/>
<dbReference type="OrthoDB" id="1733721at2759"/>
<dbReference type="Proteomes" id="UP000007110">
    <property type="component" value="Unassembled WGS sequence"/>
</dbReference>
<dbReference type="GO" id="GO:0000786">
    <property type="term" value="C:nucleosome"/>
    <property type="evidence" value="ECO:0007669"/>
    <property type="project" value="UniProtKB-KW"/>
</dbReference>
<dbReference type="GO" id="GO:0005634">
    <property type="term" value="C:nucleus"/>
    <property type="evidence" value="ECO:0007669"/>
    <property type="project" value="UniProtKB-SubCell"/>
</dbReference>
<dbReference type="GO" id="GO:0003677">
    <property type="term" value="F:DNA binding"/>
    <property type="evidence" value="ECO:0007669"/>
    <property type="project" value="UniProtKB-KW"/>
</dbReference>
<dbReference type="GO" id="GO:0046982">
    <property type="term" value="F:protein heterodimerization activity"/>
    <property type="evidence" value="ECO:0007669"/>
    <property type="project" value="InterPro"/>
</dbReference>
<dbReference type="GO" id="GO:0030527">
    <property type="term" value="F:structural constituent of chromatin"/>
    <property type="evidence" value="ECO:0007669"/>
    <property type="project" value="InterPro"/>
</dbReference>
<dbReference type="CDD" id="cd22910">
    <property type="entry name" value="HFD_H2B"/>
    <property type="match status" value="1"/>
</dbReference>
<dbReference type="FunFam" id="1.10.20.10:FF:000016">
    <property type="entry name" value="Histone H2B"/>
    <property type="match status" value="1"/>
</dbReference>
<dbReference type="Gene3D" id="1.10.20.10">
    <property type="entry name" value="Histone, subunit A"/>
    <property type="match status" value="1"/>
</dbReference>
<dbReference type="InterPro" id="IPR009072">
    <property type="entry name" value="Histone-fold"/>
</dbReference>
<dbReference type="InterPro" id="IPR007125">
    <property type="entry name" value="Histone_H2A/H2B/H3"/>
</dbReference>
<dbReference type="InterPro" id="IPR000558">
    <property type="entry name" value="Histone_H2B"/>
</dbReference>
<dbReference type="InterPro" id="IPR055333">
    <property type="entry name" value="HISTONE_H2B_site"/>
</dbReference>
<dbReference type="PANTHER" id="PTHR23428">
    <property type="entry name" value="HISTONE H2B"/>
    <property type="match status" value="1"/>
</dbReference>
<dbReference type="Pfam" id="PF00125">
    <property type="entry name" value="Histone"/>
    <property type="match status" value="1"/>
</dbReference>
<dbReference type="PRINTS" id="PR00621">
    <property type="entry name" value="HISTONEH2B"/>
</dbReference>
<dbReference type="SMART" id="SM00427">
    <property type="entry name" value="H2B"/>
    <property type="match status" value="1"/>
</dbReference>
<dbReference type="SUPFAM" id="SSF47113">
    <property type="entry name" value="Histone-fold"/>
    <property type="match status" value="1"/>
</dbReference>
<dbReference type="PROSITE" id="PS00357">
    <property type="entry name" value="HISTONE_H2B"/>
    <property type="match status" value="1"/>
</dbReference>
<name>H2BL3_STRPU</name>
<keyword id="KW-0158">Chromosome</keyword>
<keyword id="KW-0238">DNA-binding</keyword>
<keyword id="KW-0325">Glycoprotein</keyword>
<keyword id="KW-1017">Isopeptide bond</keyword>
<keyword id="KW-0544">Nucleosome core</keyword>
<keyword id="KW-0539">Nucleus</keyword>
<keyword id="KW-1185">Reference proteome</keyword>
<keyword id="KW-0832">Ubl conjugation</keyword>
<feature type="initiator methionine" description="Removed" evidence="1">
    <location>
        <position position="1"/>
    </location>
</feature>
<feature type="chain" id="PRO_0000071899" description="Late histone H2B.L3">
    <location>
        <begin position="2"/>
        <end position="123"/>
    </location>
</feature>
<feature type="region of interest" description="Disordered" evidence="2">
    <location>
        <begin position="1"/>
        <end position="32"/>
    </location>
</feature>
<feature type="compositionally biased region" description="Low complexity" evidence="2">
    <location>
        <begin position="1"/>
        <end position="10"/>
    </location>
</feature>
<feature type="glycosylation site" description="O-linked (GlcNAc) serine" evidence="1">
    <location>
        <position position="110"/>
    </location>
</feature>
<feature type="cross-link" description="Glycyl lysine isopeptide (Lys-Gly) (interchain with G-Cter in ubiquitin)" evidence="4">
    <location>
        <position position="118"/>
    </location>
</feature>